<gene>
    <name evidence="1" type="primary">ruvA</name>
    <name type="ordered locus">CBO3071</name>
    <name type="ordered locus">CLC_2973</name>
</gene>
<evidence type="ECO:0000255" key="1">
    <source>
        <dbReference type="HAMAP-Rule" id="MF_00031"/>
    </source>
</evidence>
<reference key="1">
    <citation type="journal article" date="2007" name="Genome Res.">
        <title>Genome sequence of a proteolytic (Group I) Clostridium botulinum strain Hall A and comparative analysis of the clostridial genomes.</title>
        <authorList>
            <person name="Sebaihia M."/>
            <person name="Peck M.W."/>
            <person name="Minton N.P."/>
            <person name="Thomson N.R."/>
            <person name="Holden M.T.G."/>
            <person name="Mitchell W.J."/>
            <person name="Carter A.T."/>
            <person name="Bentley S.D."/>
            <person name="Mason D.R."/>
            <person name="Crossman L."/>
            <person name="Paul C.J."/>
            <person name="Ivens A."/>
            <person name="Wells-Bennik M.H.J."/>
            <person name="Davis I.J."/>
            <person name="Cerdeno-Tarraga A.M."/>
            <person name="Churcher C."/>
            <person name="Quail M.A."/>
            <person name="Chillingworth T."/>
            <person name="Feltwell T."/>
            <person name="Fraser A."/>
            <person name="Goodhead I."/>
            <person name="Hance Z."/>
            <person name="Jagels K."/>
            <person name="Larke N."/>
            <person name="Maddison M."/>
            <person name="Moule S."/>
            <person name="Mungall K."/>
            <person name="Norbertczak H."/>
            <person name="Rabbinowitsch E."/>
            <person name="Sanders M."/>
            <person name="Simmonds M."/>
            <person name="White B."/>
            <person name="Whithead S."/>
            <person name="Parkhill J."/>
        </authorList>
    </citation>
    <scope>NUCLEOTIDE SEQUENCE [LARGE SCALE GENOMIC DNA]</scope>
    <source>
        <strain>Hall / ATCC 3502 / NCTC 13319 / Type A</strain>
    </source>
</reference>
<reference key="2">
    <citation type="journal article" date="2007" name="PLoS ONE">
        <title>Analysis of the neurotoxin complex genes in Clostridium botulinum A1-A4 and B1 strains: BoNT/A3, /Ba4 and /B1 clusters are located within plasmids.</title>
        <authorList>
            <person name="Smith T.J."/>
            <person name="Hill K.K."/>
            <person name="Foley B.T."/>
            <person name="Detter J.C."/>
            <person name="Munk A.C."/>
            <person name="Bruce D.C."/>
            <person name="Doggett N.A."/>
            <person name="Smith L.A."/>
            <person name="Marks J.D."/>
            <person name="Xie G."/>
            <person name="Brettin T.S."/>
        </authorList>
    </citation>
    <scope>NUCLEOTIDE SEQUENCE [LARGE SCALE GENOMIC DNA]</scope>
    <source>
        <strain>Hall / ATCC 3502 / NCTC 13319 / Type A</strain>
    </source>
</reference>
<proteinExistence type="inferred from homology"/>
<comment type="function">
    <text evidence="1">The RuvA-RuvB-RuvC complex processes Holliday junction (HJ) DNA during genetic recombination and DNA repair, while the RuvA-RuvB complex plays an important role in the rescue of blocked DNA replication forks via replication fork reversal (RFR). RuvA specifically binds to HJ cruciform DNA, conferring on it an open structure. The RuvB hexamer acts as an ATP-dependent pump, pulling dsDNA into and through the RuvAB complex. HJ branch migration allows RuvC to scan DNA until it finds its consensus sequence, where it cleaves and resolves the cruciform DNA.</text>
</comment>
<comment type="subunit">
    <text evidence="1">Homotetramer. Forms an RuvA(8)-RuvB(12)-Holliday junction (HJ) complex. HJ DNA is sandwiched between 2 RuvA tetramers; dsDNA enters through RuvA and exits via RuvB. An RuvB hexamer assembles on each DNA strand where it exits the tetramer. Each RuvB hexamer is contacted by two RuvA subunits (via domain III) on 2 adjacent RuvB subunits; this complex drives branch migration. In the full resolvosome a probable DNA-RuvA(4)-RuvB(12)-RuvC(2) complex forms which resolves the HJ.</text>
</comment>
<comment type="subcellular location">
    <subcellularLocation>
        <location evidence="1">Cytoplasm</location>
    </subcellularLocation>
</comment>
<comment type="domain">
    <text evidence="1">Has three domains with a flexible linker between the domains II and III and assumes an 'L' shape. Domain III is highly mobile and contacts RuvB.</text>
</comment>
<comment type="similarity">
    <text evidence="1">Belongs to the RuvA family.</text>
</comment>
<organism>
    <name type="scientific">Clostridium botulinum (strain Hall / ATCC 3502 / NCTC 13319 / Type A)</name>
    <dbReference type="NCBI Taxonomy" id="441771"/>
    <lineage>
        <taxon>Bacteria</taxon>
        <taxon>Bacillati</taxon>
        <taxon>Bacillota</taxon>
        <taxon>Clostridia</taxon>
        <taxon>Eubacteriales</taxon>
        <taxon>Clostridiaceae</taxon>
        <taxon>Clostridium</taxon>
    </lineage>
</organism>
<sequence length="197" mass="22183">MYEYIKGKYIDMYKDYIVIENNNIGYKIYTSGSTMAKLPSIGENIMLYTEQIVREDFIGVYGFLTKDELSMFKLLLTINGVGAKAALSLLSISNVSTLKYAIKMGDEKTITRAPGIGKKTAQRIILELKDKIEIDILEEDDEQIINKVADDKKVLEAVAALVTLGYSEKEANKVINSCDKNNSLEQIIKEALKYLMK</sequence>
<feature type="chain" id="PRO_1000002431" description="Holliday junction branch migration complex subunit RuvA">
    <location>
        <begin position="1"/>
        <end position="197"/>
    </location>
</feature>
<feature type="region of interest" description="Domain I" evidence="1">
    <location>
        <begin position="1"/>
        <end position="64"/>
    </location>
</feature>
<feature type="region of interest" description="Domain II" evidence="1">
    <location>
        <begin position="65"/>
        <end position="144"/>
    </location>
</feature>
<feature type="region of interest" description="Flexible linker" evidence="1">
    <location>
        <begin position="145"/>
        <end position="149"/>
    </location>
</feature>
<feature type="region of interest" description="Domain III" evidence="1">
    <location>
        <begin position="149"/>
        <end position="197"/>
    </location>
</feature>
<accession>A5I6F2</accession>
<accession>A7G7N5</accession>
<name>RUVA_CLOBH</name>
<dbReference type="EMBL" id="CP000727">
    <property type="protein sequence ID" value="ABS38017.1"/>
    <property type="molecule type" value="Genomic_DNA"/>
</dbReference>
<dbReference type="EMBL" id="AM412317">
    <property type="protein sequence ID" value="CAL84634.1"/>
    <property type="molecule type" value="Genomic_DNA"/>
</dbReference>
<dbReference type="RefSeq" id="WP_012048089.1">
    <property type="nucleotide sequence ID" value="NC_009698.1"/>
</dbReference>
<dbReference type="RefSeq" id="YP_001255563.1">
    <property type="nucleotide sequence ID" value="NC_009495.1"/>
</dbReference>
<dbReference type="RefSeq" id="YP_001388800.1">
    <property type="nucleotide sequence ID" value="NC_009698.1"/>
</dbReference>
<dbReference type="SMR" id="A5I6F2"/>
<dbReference type="GeneID" id="5187366"/>
<dbReference type="KEGG" id="cbh:CLC_2973"/>
<dbReference type="KEGG" id="cbo:CBO3071"/>
<dbReference type="PATRIC" id="fig|413999.7.peg.3049"/>
<dbReference type="HOGENOM" id="CLU_087936_3_0_9"/>
<dbReference type="PRO" id="PR:A5I6F2"/>
<dbReference type="Proteomes" id="UP000001986">
    <property type="component" value="Chromosome"/>
</dbReference>
<dbReference type="GO" id="GO:0005737">
    <property type="term" value="C:cytoplasm"/>
    <property type="evidence" value="ECO:0007669"/>
    <property type="project" value="UniProtKB-SubCell"/>
</dbReference>
<dbReference type="GO" id="GO:0009379">
    <property type="term" value="C:Holliday junction helicase complex"/>
    <property type="evidence" value="ECO:0007669"/>
    <property type="project" value="InterPro"/>
</dbReference>
<dbReference type="GO" id="GO:0048476">
    <property type="term" value="C:Holliday junction resolvase complex"/>
    <property type="evidence" value="ECO:0007669"/>
    <property type="project" value="UniProtKB-UniRule"/>
</dbReference>
<dbReference type="GO" id="GO:0005524">
    <property type="term" value="F:ATP binding"/>
    <property type="evidence" value="ECO:0007669"/>
    <property type="project" value="InterPro"/>
</dbReference>
<dbReference type="GO" id="GO:0000400">
    <property type="term" value="F:four-way junction DNA binding"/>
    <property type="evidence" value="ECO:0007669"/>
    <property type="project" value="UniProtKB-UniRule"/>
</dbReference>
<dbReference type="GO" id="GO:0009378">
    <property type="term" value="F:four-way junction helicase activity"/>
    <property type="evidence" value="ECO:0000318"/>
    <property type="project" value="GO_Central"/>
</dbReference>
<dbReference type="GO" id="GO:0006310">
    <property type="term" value="P:DNA recombination"/>
    <property type="evidence" value="ECO:0007669"/>
    <property type="project" value="UniProtKB-UniRule"/>
</dbReference>
<dbReference type="GO" id="GO:0006281">
    <property type="term" value="P:DNA repair"/>
    <property type="evidence" value="ECO:0007669"/>
    <property type="project" value="UniProtKB-UniRule"/>
</dbReference>
<dbReference type="GO" id="GO:0009432">
    <property type="term" value="P:SOS response"/>
    <property type="evidence" value="ECO:0000318"/>
    <property type="project" value="GO_Central"/>
</dbReference>
<dbReference type="CDD" id="cd14332">
    <property type="entry name" value="UBA_RuvA_C"/>
    <property type="match status" value="1"/>
</dbReference>
<dbReference type="Gene3D" id="1.10.150.20">
    <property type="entry name" value="5' to 3' exonuclease, C-terminal subdomain"/>
    <property type="match status" value="1"/>
</dbReference>
<dbReference type="Gene3D" id="1.10.8.10">
    <property type="entry name" value="DNA helicase RuvA subunit, C-terminal domain"/>
    <property type="match status" value="1"/>
</dbReference>
<dbReference type="Gene3D" id="2.40.50.140">
    <property type="entry name" value="Nucleic acid-binding proteins"/>
    <property type="match status" value="1"/>
</dbReference>
<dbReference type="HAMAP" id="MF_00031">
    <property type="entry name" value="DNA_HJ_migration_RuvA"/>
    <property type="match status" value="1"/>
</dbReference>
<dbReference type="InterPro" id="IPR013849">
    <property type="entry name" value="DNA_helicase_Holl-junc_RuvA_I"/>
</dbReference>
<dbReference type="InterPro" id="IPR003583">
    <property type="entry name" value="Hlx-hairpin-Hlx_DNA-bd_motif"/>
</dbReference>
<dbReference type="InterPro" id="IPR012340">
    <property type="entry name" value="NA-bd_OB-fold"/>
</dbReference>
<dbReference type="InterPro" id="IPR000085">
    <property type="entry name" value="RuvA"/>
</dbReference>
<dbReference type="InterPro" id="IPR010994">
    <property type="entry name" value="RuvA_2-like"/>
</dbReference>
<dbReference type="InterPro" id="IPR011114">
    <property type="entry name" value="RuvA_C"/>
</dbReference>
<dbReference type="InterPro" id="IPR036267">
    <property type="entry name" value="RuvA_C_sf"/>
</dbReference>
<dbReference type="NCBIfam" id="TIGR00084">
    <property type="entry name" value="ruvA"/>
    <property type="match status" value="1"/>
</dbReference>
<dbReference type="Pfam" id="PF14520">
    <property type="entry name" value="HHH_5"/>
    <property type="match status" value="1"/>
</dbReference>
<dbReference type="Pfam" id="PF07499">
    <property type="entry name" value="RuvA_C"/>
    <property type="match status" value="1"/>
</dbReference>
<dbReference type="Pfam" id="PF01330">
    <property type="entry name" value="RuvA_N"/>
    <property type="match status" value="1"/>
</dbReference>
<dbReference type="SMART" id="SM00278">
    <property type="entry name" value="HhH1"/>
    <property type="match status" value="2"/>
</dbReference>
<dbReference type="SUPFAM" id="SSF46929">
    <property type="entry name" value="DNA helicase RuvA subunit, C-terminal domain"/>
    <property type="match status" value="1"/>
</dbReference>
<dbReference type="SUPFAM" id="SSF50249">
    <property type="entry name" value="Nucleic acid-binding proteins"/>
    <property type="match status" value="1"/>
</dbReference>
<dbReference type="SUPFAM" id="SSF47781">
    <property type="entry name" value="RuvA domain 2-like"/>
    <property type="match status" value="1"/>
</dbReference>
<protein>
    <recommendedName>
        <fullName evidence="1">Holliday junction branch migration complex subunit RuvA</fullName>
    </recommendedName>
</protein>
<keyword id="KW-0963">Cytoplasm</keyword>
<keyword id="KW-0227">DNA damage</keyword>
<keyword id="KW-0233">DNA recombination</keyword>
<keyword id="KW-0234">DNA repair</keyword>
<keyword id="KW-0238">DNA-binding</keyword>
<keyword id="KW-1185">Reference proteome</keyword>